<reference key="1">
    <citation type="journal article" date="2009" name="Genome Res.">
        <title>Newly introduced genomic prophage islands are critical determinants of in vivo competitiveness in the Liverpool epidemic strain of Pseudomonas aeruginosa.</title>
        <authorList>
            <person name="Winstanley C."/>
            <person name="Langille M.G.I."/>
            <person name="Fothergill J.L."/>
            <person name="Kukavica-Ibrulj I."/>
            <person name="Paradis-Bleau C."/>
            <person name="Sanschagrin F."/>
            <person name="Thomson N.R."/>
            <person name="Winsor G.L."/>
            <person name="Quail M.A."/>
            <person name="Lennard N."/>
            <person name="Bignell A."/>
            <person name="Clarke L."/>
            <person name="Seeger K."/>
            <person name="Saunders D."/>
            <person name="Harris D."/>
            <person name="Parkhill J."/>
            <person name="Hancock R.E.W."/>
            <person name="Brinkman F.S.L."/>
            <person name="Levesque R.C."/>
        </authorList>
    </citation>
    <scope>NUCLEOTIDE SEQUENCE [LARGE SCALE GENOMIC DNA]</scope>
    <source>
        <strain>LESB58</strain>
    </source>
</reference>
<proteinExistence type="inferred from homology"/>
<accession>B7V159</accession>
<name>RL32_PSEA8</name>
<feature type="chain" id="PRO_1000120161" description="Large ribosomal subunit protein bL32">
    <location>
        <begin position="1"/>
        <end position="60"/>
    </location>
</feature>
<feature type="region of interest" description="Disordered" evidence="2">
    <location>
        <begin position="1"/>
        <end position="60"/>
    </location>
</feature>
<feature type="compositionally biased region" description="Basic and acidic residues" evidence="2">
    <location>
        <begin position="11"/>
        <end position="22"/>
    </location>
</feature>
<evidence type="ECO:0000255" key="1">
    <source>
        <dbReference type="HAMAP-Rule" id="MF_00340"/>
    </source>
</evidence>
<evidence type="ECO:0000256" key="2">
    <source>
        <dbReference type="SAM" id="MobiDB-lite"/>
    </source>
</evidence>
<evidence type="ECO:0000305" key="3"/>
<gene>
    <name evidence="1" type="primary">rpmF</name>
    <name type="ordered locus">PLES_20931</name>
</gene>
<protein>
    <recommendedName>
        <fullName evidence="1">Large ribosomal subunit protein bL32</fullName>
    </recommendedName>
    <alternativeName>
        <fullName evidence="3">50S ribosomal protein L32</fullName>
    </alternativeName>
</protein>
<comment type="similarity">
    <text evidence="1">Belongs to the bacterial ribosomal protein bL32 family.</text>
</comment>
<organism>
    <name type="scientific">Pseudomonas aeruginosa (strain LESB58)</name>
    <dbReference type="NCBI Taxonomy" id="557722"/>
    <lineage>
        <taxon>Bacteria</taxon>
        <taxon>Pseudomonadati</taxon>
        <taxon>Pseudomonadota</taxon>
        <taxon>Gammaproteobacteria</taxon>
        <taxon>Pseudomonadales</taxon>
        <taxon>Pseudomonadaceae</taxon>
        <taxon>Pseudomonas</taxon>
    </lineage>
</organism>
<keyword id="KW-0687">Ribonucleoprotein</keyword>
<keyword id="KW-0689">Ribosomal protein</keyword>
<dbReference type="EMBL" id="FM209186">
    <property type="protein sequence ID" value="CAW26820.1"/>
    <property type="molecule type" value="Genomic_DNA"/>
</dbReference>
<dbReference type="RefSeq" id="WP_003091143.1">
    <property type="nucleotide sequence ID" value="NC_011770.1"/>
</dbReference>
<dbReference type="SMR" id="B7V159"/>
<dbReference type="GeneID" id="77220539"/>
<dbReference type="KEGG" id="pag:PLES_20931"/>
<dbReference type="HOGENOM" id="CLU_129084_2_1_6"/>
<dbReference type="GO" id="GO:0015934">
    <property type="term" value="C:large ribosomal subunit"/>
    <property type="evidence" value="ECO:0007669"/>
    <property type="project" value="InterPro"/>
</dbReference>
<dbReference type="GO" id="GO:0003735">
    <property type="term" value="F:structural constituent of ribosome"/>
    <property type="evidence" value="ECO:0007669"/>
    <property type="project" value="InterPro"/>
</dbReference>
<dbReference type="GO" id="GO:0006412">
    <property type="term" value="P:translation"/>
    <property type="evidence" value="ECO:0007669"/>
    <property type="project" value="UniProtKB-UniRule"/>
</dbReference>
<dbReference type="HAMAP" id="MF_00340">
    <property type="entry name" value="Ribosomal_bL32"/>
    <property type="match status" value="1"/>
</dbReference>
<dbReference type="InterPro" id="IPR002677">
    <property type="entry name" value="Ribosomal_bL32"/>
</dbReference>
<dbReference type="InterPro" id="IPR044957">
    <property type="entry name" value="Ribosomal_bL32_bact"/>
</dbReference>
<dbReference type="InterPro" id="IPR011332">
    <property type="entry name" value="Ribosomal_zn-bd"/>
</dbReference>
<dbReference type="NCBIfam" id="TIGR01031">
    <property type="entry name" value="rpmF_bact"/>
    <property type="match status" value="1"/>
</dbReference>
<dbReference type="PANTHER" id="PTHR35534">
    <property type="entry name" value="50S RIBOSOMAL PROTEIN L32"/>
    <property type="match status" value="1"/>
</dbReference>
<dbReference type="PANTHER" id="PTHR35534:SF1">
    <property type="entry name" value="LARGE RIBOSOMAL SUBUNIT PROTEIN BL32"/>
    <property type="match status" value="1"/>
</dbReference>
<dbReference type="Pfam" id="PF01783">
    <property type="entry name" value="Ribosomal_L32p"/>
    <property type="match status" value="1"/>
</dbReference>
<dbReference type="SUPFAM" id="SSF57829">
    <property type="entry name" value="Zn-binding ribosomal proteins"/>
    <property type="match status" value="1"/>
</dbReference>
<sequence length="60" mass="6792">MAVQQNKKSRSARDMRRSHDALESNALSVEKSTGEVHLRHHVSPDGFYRGRKVVDKGSDE</sequence>